<keyword id="KW-0066">ATP synthesis</keyword>
<keyword id="KW-0138">CF(0)</keyword>
<keyword id="KW-0375">Hydrogen ion transport</keyword>
<keyword id="KW-0406">Ion transport</keyword>
<keyword id="KW-0472">Membrane</keyword>
<keyword id="KW-0994">Organellar chromatophore</keyword>
<keyword id="KW-0934">Plastid</keyword>
<keyword id="KW-0793">Thylakoid</keyword>
<keyword id="KW-0812">Transmembrane</keyword>
<keyword id="KW-1133">Transmembrane helix</keyword>
<keyword id="KW-0813">Transport</keyword>
<comment type="function">
    <text evidence="2">F(1)F(0) ATP synthase produces ATP from ADP in the presence of a proton or sodium gradient. F-type ATPases consist of two structural domains, F(1) containing the extramembraneous catalytic core and F(0) containing the membrane proton channel, linked together by a central stalk and a peripheral stalk. During catalysis, ATP synthesis in the catalytic domain of F(1) is coupled via a rotary mechanism of the central stalk subunits to proton translocation.</text>
</comment>
<comment type="function">
    <text evidence="2">Component of the F(0) channel, it forms part of the peripheral stalk, linking F(1) to F(0).</text>
</comment>
<comment type="subunit">
    <text evidence="2">F-type ATPases have 2 components, F(1) - the catalytic core - and F(0) - the membrane proton channel. F(1) has five subunits: alpha(3), beta(3), gamma(1), delta(1), epsilon(1). F(0) has four main subunits: a(1), b(1), b'(1) and c(10-14). The alpha and beta chains form an alternating ring which encloses part of the gamma chain. F(1) is attached to F(0) by a central stalk formed by the gamma and epsilon chains, while a peripheral stalk is formed by the delta, b and b' chains.</text>
</comment>
<comment type="subcellular location">
    <subcellularLocation>
        <location evidence="1">Plastid</location>
        <location evidence="1">Organellar chromatophore thylakoid membrane</location>
        <topology evidence="2">Single-pass membrane protein</topology>
    </subcellularLocation>
</comment>
<comment type="similarity">
    <text evidence="2">Belongs to the ATPase B chain family.</text>
</comment>
<geneLocation type="organellar chromatophore"/>
<accession>B1X3Y4</accession>
<reference key="1">
    <citation type="journal article" date="2008" name="Curr. Biol.">
        <title>Chromatophore genome sequence of Paulinella sheds light on acquisition of photosynthesis by eukaryotes.</title>
        <authorList>
            <person name="Nowack E.C.M."/>
            <person name="Melkonian M."/>
            <person name="Gloeckner G."/>
        </authorList>
    </citation>
    <scope>NUCLEOTIDE SEQUENCE [LARGE SCALE GENOMIC DNA]</scope>
</reference>
<dbReference type="EMBL" id="CP000815">
    <property type="protein sequence ID" value="ACB42653.1"/>
    <property type="molecule type" value="Genomic_DNA"/>
</dbReference>
<dbReference type="RefSeq" id="YP_002048863.1">
    <property type="nucleotide sequence ID" value="NC_011087.1"/>
</dbReference>
<dbReference type="SMR" id="B1X3Y4"/>
<dbReference type="GeneID" id="6481243"/>
<dbReference type="GO" id="GO:0070118">
    <property type="term" value="C:organellar chromatophore thylakoid membrane"/>
    <property type="evidence" value="ECO:0007669"/>
    <property type="project" value="UniProtKB-SubCell"/>
</dbReference>
<dbReference type="GO" id="GO:0009536">
    <property type="term" value="C:plastid"/>
    <property type="evidence" value="ECO:0007669"/>
    <property type="project" value="UniProtKB-KW"/>
</dbReference>
<dbReference type="GO" id="GO:0045259">
    <property type="term" value="C:proton-transporting ATP synthase complex"/>
    <property type="evidence" value="ECO:0007669"/>
    <property type="project" value="UniProtKB-KW"/>
</dbReference>
<dbReference type="GO" id="GO:0015078">
    <property type="term" value="F:proton transmembrane transporter activity"/>
    <property type="evidence" value="ECO:0007669"/>
    <property type="project" value="InterPro"/>
</dbReference>
<dbReference type="GO" id="GO:0015986">
    <property type="term" value="P:proton motive force-driven ATP synthesis"/>
    <property type="evidence" value="ECO:0007669"/>
    <property type="project" value="InterPro"/>
</dbReference>
<dbReference type="CDD" id="cd06503">
    <property type="entry name" value="ATP-synt_Fo_b"/>
    <property type="match status" value="1"/>
</dbReference>
<dbReference type="HAMAP" id="MF_01398">
    <property type="entry name" value="ATP_synth_b_bprime"/>
    <property type="match status" value="1"/>
</dbReference>
<dbReference type="InterPro" id="IPR002146">
    <property type="entry name" value="ATP_synth_b/b'su_bac/chlpt"/>
</dbReference>
<dbReference type="NCBIfam" id="NF005606">
    <property type="entry name" value="PRK07352.1"/>
    <property type="match status" value="1"/>
</dbReference>
<dbReference type="PANTHER" id="PTHR34264">
    <property type="entry name" value="ATP SYNTHASE SUBUNIT B, CHLOROPLASTIC"/>
    <property type="match status" value="1"/>
</dbReference>
<dbReference type="PANTHER" id="PTHR34264:SF3">
    <property type="entry name" value="ATP SYNTHASE SUBUNIT B, CHLOROPLASTIC"/>
    <property type="match status" value="1"/>
</dbReference>
<dbReference type="Pfam" id="PF00430">
    <property type="entry name" value="ATP-synt_B"/>
    <property type="match status" value="1"/>
</dbReference>
<organism>
    <name type="scientific">Paulinella chromatophora</name>
    <dbReference type="NCBI Taxonomy" id="39717"/>
    <lineage>
        <taxon>Eukaryota</taxon>
        <taxon>Sar</taxon>
        <taxon>Rhizaria</taxon>
        <taxon>Cercozoa</taxon>
        <taxon>Imbricatea</taxon>
        <taxon>Silicofilosea</taxon>
        <taxon>Euglyphida</taxon>
        <taxon>Paulinellidae</taxon>
        <taxon>Paulinella</taxon>
    </lineage>
</organism>
<evidence type="ECO:0000250" key="1"/>
<evidence type="ECO:0000255" key="2">
    <source>
        <dbReference type="HAMAP-Rule" id="MF_01398"/>
    </source>
</evidence>
<sequence>MNFNLFPLFAVEGGFGLNLNPLDTNLINLIIVIGVLFTFLRGFLGEMLERRRQAILANLSDAEQNLKNASVALNKAQLDLAEAQERAARILADGKTRAESIRVNSERRTIDAMAALKQDAIADLSAEMVRISEELRLQTALQAIEKAMVTLPTKLDETAHSKLIDQSIVNLEQA</sequence>
<proteinExistence type="inferred from homology"/>
<protein>
    <recommendedName>
        <fullName evidence="2">ATP synthase subunit b, organellar chromatophore</fullName>
    </recommendedName>
    <alternativeName>
        <fullName evidence="2">ATP synthase F(0) sector subunit b</fullName>
    </alternativeName>
    <alternativeName>
        <fullName evidence="2">ATPase subunit I</fullName>
    </alternativeName>
</protein>
<name>ATPF_PAUCH</name>
<feature type="chain" id="PRO_0000368986" description="ATP synthase subunit b, organellar chromatophore">
    <location>
        <begin position="1"/>
        <end position="174"/>
    </location>
</feature>
<feature type="transmembrane region" description="Helical" evidence="2">
    <location>
        <begin position="26"/>
        <end position="46"/>
    </location>
</feature>
<gene>
    <name evidence="2" type="primary">atpF</name>
    <name type="ordered locus">PCC_0203</name>
</gene>